<proteinExistence type="inferred from homology"/>
<dbReference type="EC" id="6.3.5.7" evidence="1"/>
<dbReference type="EMBL" id="CP001191">
    <property type="protein sequence ID" value="ACI54812.1"/>
    <property type="molecule type" value="Genomic_DNA"/>
</dbReference>
<dbReference type="RefSeq" id="WP_012557508.1">
    <property type="nucleotide sequence ID" value="NC_011369.1"/>
</dbReference>
<dbReference type="SMR" id="B5ZMJ0"/>
<dbReference type="STRING" id="395492.Rleg2_1521"/>
<dbReference type="KEGG" id="rlt:Rleg2_1521"/>
<dbReference type="eggNOG" id="COG0154">
    <property type="taxonomic scope" value="Bacteria"/>
</dbReference>
<dbReference type="HOGENOM" id="CLU_009600_0_3_5"/>
<dbReference type="Proteomes" id="UP000008330">
    <property type="component" value="Chromosome"/>
</dbReference>
<dbReference type="GO" id="GO:0030956">
    <property type="term" value="C:glutamyl-tRNA(Gln) amidotransferase complex"/>
    <property type="evidence" value="ECO:0007669"/>
    <property type="project" value="InterPro"/>
</dbReference>
<dbReference type="GO" id="GO:0005524">
    <property type="term" value="F:ATP binding"/>
    <property type="evidence" value="ECO:0007669"/>
    <property type="project" value="UniProtKB-KW"/>
</dbReference>
<dbReference type="GO" id="GO:0050567">
    <property type="term" value="F:glutaminyl-tRNA synthase (glutamine-hydrolyzing) activity"/>
    <property type="evidence" value="ECO:0007669"/>
    <property type="project" value="UniProtKB-UniRule"/>
</dbReference>
<dbReference type="GO" id="GO:0006412">
    <property type="term" value="P:translation"/>
    <property type="evidence" value="ECO:0007669"/>
    <property type="project" value="UniProtKB-UniRule"/>
</dbReference>
<dbReference type="Gene3D" id="3.90.1300.10">
    <property type="entry name" value="Amidase signature (AS) domain"/>
    <property type="match status" value="1"/>
</dbReference>
<dbReference type="HAMAP" id="MF_00120">
    <property type="entry name" value="GatA"/>
    <property type="match status" value="1"/>
</dbReference>
<dbReference type="InterPro" id="IPR000120">
    <property type="entry name" value="Amidase"/>
</dbReference>
<dbReference type="InterPro" id="IPR020556">
    <property type="entry name" value="Amidase_CS"/>
</dbReference>
<dbReference type="InterPro" id="IPR023631">
    <property type="entry name" value="Amidase_dom"/>
</dbReference>
<dbReference type="InterPro" id="IPR036928">
    <property type="entry name" value="AS_sf"/>
</dbReference>
<dbReference type="InterPro" id="IPR004412">
    <property type="entry name" value="GatA"/>
</dbReference>
<dbReference type="NCBIfam" id="TIGR00132">
    <property type="entry name" value="gatA"/>
    <property type="match status" value="1"/>
</dbReference>
<dbReference type="PANTHER" id="PTHR11895:SF151">
    <property type="entry name" value="GLUTAMYL-TRNA(GLN) AMIDOTRANSFERASE SUBUNIT A"/>
    <property type="match status" value="1"/>
</dbReference>
<dbReference type="PANTHER" id="PTHR11895">
    <property type="entry name" value="TRANSAMIDASE"/>
    <property type="match status" value="1"/>
</dbReference>
<dbReference type="Pfam" id="PF01425">
    <property type="entry name" value="Amidase"/>
    <property type="match status" value="1"/>
</dbReference>
<dbReference type="SUPFAM" id="SSF75304">
    <property type="entry name" value="Amidase signature (AS) enzymes"/>
    <property type="match status" value="1"/>
</dbReference>
<dbReference type="PROSITE" id="PS00571">
    <property type="entry name" value="AMIDASES"/>
    <property type="match status" value="1"/>
</dbReference>
<feature type="chain" id="PRO_1000095164" description="Glutamyl-tRNA(Gln) amidotransferase subunit A">
    <location>
        <begin position="1"/>
        <end position="493"/>
    </location>
</feature>
<feature type="active site" description="Charge relay system" evidence="1">
    <location>
        <position position="79"/>
    </location>
</feature>
<feature type="active site" description="Charge relay system" evidence="1">
    <location>
        <position position="159"/>
    </location>
</feature>
<feature type="active site" description="Acyl-ester intermediate" evidence="1">
    <location>
        <position position="183"/>
    </location>
</feature>
<evidence type="ECO:0000255" key="1">
    <source>
        <dbReference type="HAMAP-Rule" id="MF_00120"/>
    </source>
</evidence>
<sequence>MSELTSLTIAEARRKLRAKEITALELTEAYISAIDAANGHLNAYIKVTPDLARLMAKNSDERIAAGKAGDLEGIPLGIKDLFATVGVHTQACSHILDGFEPRYESTVTQNLWDDGAVMLGKLNMDEFAMGSSNETSHYGAVINPWRAAGSNQQLVPGGSSGGSAAAVAAHLCAGATATDTGGSIRQPAAFTGTVGIKPTYGRCSRWGTVAFASSLDQAGPIARDVRDAAILLKSMASVDAKDTTSVDLPVPDYEAALGQSLKGMKIGIPSEYRVDGMPEEIETLWRQGIAWLKDAGAEIVDISLPHTKYALPAYYIVAPAEASSNLARYDGVRYGLRVDGKDIVDMYEKTRAAGFGKEVKRRIMIGTYVLSAGYYDAYYIRAQKVRTLIKRDFELAFNAGVDAILTPATPSSAFGVADENLASDPVKMYLNDIFTVTVNMAGLPGIAVPAGLDQKGLPLGLQLIGKPFDEETLFKTAHVIEQAAGRFTPARWW</sequence>
<keyword id="KW-0067">ATP-binding</keyword>
<keyword id="KW-0436">Ligase</keyword>
<keyword id="KW-0547">Nucleotide-binding</keyword>
<keyword id="KW-0648">Protein biosynthesis</keyword>
<keyword id="KW-1185">Reference proteome</keyword>
<protein>
    <recommendedName>
        <fullName evidence="1">Glutamyl-tRNA(Gln) amidotransferase subunit A</fullName>
        <shortName evidence="1">Glu-ADT subunit A</shortName>
        <ecNumber evidence="1">6.3.5.7</ecNumber>
    </recommendedName>
</protein>
<comment type="function">
    <text evidence="1">Allows the formation of correctly charged Gln-tRNA(Gln) through the transamidation of misacylated Glu-tRNA(Gln) in organisms which lack glutaminyl-tRNA synthetase. The reaction takes place in the presence of glutamine and ATP through an activated gamma-phospho-Glu-tRNA(Gln).</text>
</comment>
<comment type="catalytic activity">
    <reaction evidence="1">
        <text>L-glutamyl-tRNA(Gln) + L-glutamine + ATP + H2O = L-glutaminyl-tRNA(Gln) + L-glutamate + ADP + phosphate + H(+)</text>
        <dbReference type="Rhea" id="RHEA:17521"/>
        <dbReference type="Rhea" id="RHEA-COMP:9681"/>
        <dbReference type="Rhea" id="RHEA-COMP:9684"/>
        <dbReference type="ChEBI" id="CHEBI:15377"/>
        <dbReference type="ChEBI" id="CHEBI:15378"/>
        <dbReference type="ChEBI" id="CHEBI:29985"/>
        <dbReference type="ChEBI" id="CHEBI:30616"/>
        <dbReference type="ChEBI" id="CHEBI:43474"/>
        <dbReference type="ChEBI" id="CHEBI:58359"/>
        <dbReference type="ChEBI" id="CHEBI:78520"/>
        <dbReference type="ChEBI" id="CHEBI:78521"/>
        <dbReference type="ChEBI" id="CHEBI:456216"/>
        <dbReference type="EC" id="6.3.5.7"/>
    </reaction>
</comment>
<comment type="subunit">
    <text evidence="1">Heterotrimer of A, B and C subunits.</text>
</comment>
<comment type="similarity">
    <text evidence="1">Belongs to the amidase family. GatA subfamily.</text>
</comment>
<accession>B5ZMJ0</accession>
<reference key="1">
    <citation type="journal article" date="2010" name="Stand. Genomic Sci.">
        <title>Complete genome sequence of Rhizobium leguminosarum bv trifolii strain WSM2304, an effective microsymbiont of the South American clover Trifolium polymorphum.</title>
        <authorList>
            <person name="Reeve W."/>
            <person name="O'Hara G."/>
            <person name="Chain P."/>
            <person name="Ardley J."/>
            <person name="Brau L."/>
            <person name="Nandesena K."/>
            <person name="Tiwari R."/>
            <person name="Malfatti S."/>
            <person name="Kiss H."/>
            <person name="Lapidus A."/>
            <person name="Copeland A."/>
            <person name="Nolan M."/>
            <person name="Land M."/>
            <person name="Ivanova N."/>
            <person name="Mavromatis K."/>
            <person name="Markowitz V."/>
            <person name="Kyrpides N."/>
            <person name="Melino V."/>
            <person name="Denton M."/>
            <person name="Yates R."/>
            <person name="Howieson J."/>
        </authorList>
    </citation>
    <scope>NUCLEOTIDE SEQUENCE [LARGE SCALE GENOMIC DNA]</scope>
    <source>
        <strain>WSM2304</strain>
    </source>
</reference>
<gene>
    <name evidence="1" type="primary">gatA</name>
    <name type="ordered locus">Rleg2_1521</name>
</gene>
<organism>
    <name type="scientific">Rhizobium leguminosarum bv. trifolii (strain WSM2304)</name>
    <dbReference type="NCBI Taxonomy" id="395492"/>
    <lineage>
        <taxon>Bacteria</taxon>
        <taxon>Pseudomonadati</taxon>
        <taxon>Pseudomonadota</taxon>
        <taxon>Alphaproteobacteria</taxon>
        <taxon>Hyphomicrobiales</taxon>
        <taxon>Rhizobiaceae</taxon>
        <taxon>Rhizobium/Agrobacterium group</taxon>
        <taxon>Rhizobium</taxon>
    </lineage>
</organism>
<name>GATA_RHILW</name>